<comment type="function">
    <text evidence="1">Bidirectionally degrades single-stranded DNA into large acid-insoluble oligonucleotides, which are then degraded further into small acid-soluble oligonucleotides.</text>
</comment>
<comment type="catalytic activity">
    <reaction evidence="1">
        <text>Exonucleolytic cleavage in either 5'- to 3'- or 3'- to 5'-direction to yield nucleoside 5'-phosphates.</text>
        <dbReference type="EC" id="3.1.11.6"/>
    </reaction>
</comment>
<comment type="subunit">
    <text evidence="1">Heterooligomer composed of large and small subunits.</text>
</comment>
<comment type="subcellular location">
    <subcellularLocation>
        <location evidence="1">Cytoplasm</location>
    </subcellularLocation>
</comment>
<comment type="similarity">
    <text evidence="1">Belongs to the XseA family.</text>
</comment>
<organism>
    <name type="scientific">Stenotrophomonas maltophilia (strain R551-3)</name>
    <dbReference type="NCBI Taxonomy" id="391008"/>
    <lineage>
        <taxon>Bacteria</taxon>
        <taxon>Pseudomonadati</taxon>
        <taxon>Pseudomonadota</taxon>
        <taxon>Gammaproteobacteria</taxon>
        <taxon>Lysobacterales</taxon>
        <taxon>Lysobacteraceae</taxon>
        <taxon>Stenotrophomonas</taxon>
        <taxon>Stenotrophomonas maltophilia group</taxon>
    </lineage>
</organism>
<sequence length="443" mass="49326">MQPRNNDILTPSQLNTLARDLLEGSFPAIWVEAELGSVARPSSGHLYFTLKDARAQLRAAMFRMKAQYLKFVPREGMRVLVRGKVTLYDARGEYQMVLDHMEEAGEGALRRAFEELKARLEAEGLFDQARKRPMPAHVQRLAVITSPTGAAVRDVLSVLGRRFPLLEVDLLPTLVQGNSAAAQITRLLQAADASGRYDVILLTRGGGSLEDLWAFNDEALARAIAASRTPVVSAVGHETDFSLSDFAADLRAPTPSVAAELLVPDQRELALRLRRNAARMVQLQRHTMQQAMQRADRALLRLNAQSPQARLDLLRRRQLDLGRRLHAAFNQQQERRAARLRHAAAILRGHHPQRQLDAMQRRLAALRGRPQIAMQRLLERDALRLRGLARSLEAVSPLATVARGYSILTRSDDGTLVRQVDQVQPGDALQARVGDGVIDVQVK</sequence>
<keyword id="KW-0963">Cytoplasm</keyword>
<keyword id="KW-0269">Exonuclease</keyword>
<keyword id="KW-0378">Hydrolase</keyword>
<keyword id="KW-0540">Nuclease</keyword>
<gene>
    <name evidence="1" type="primary">xseA</name>
    <name type="ordered locus">Smal_2759</name>
</gene>
<feature type="chain" id="PRO_1000122092" description="Exodeoxyribonuclease 7 large subunit">
    <location>
        <begin position="1"/>
        <end position="443"/>
    </location>
</feature>
<dbReference type="EC" id="3.1.11.6" evidence="1"/>
<dbReference type="EMBL" id="CP001111">
    <property type="protein sequence ID" value="ACF52459.1"/>
    <property type="molecule type" value="Genomic_DNA"/>
</dbReference>
<dbReference type="RefSeq" id="WP_012511662.1">
    <property type="nucleotide sequence ID" value="NC_011071.1"/>
</dbReference>
<dbReference type="SMR" id="B4SQC8"/>
<dbReference type="STRING" id="391008.Smal_2759"/>
<dbReference type="KEGG" id="smt:Smal_2759"/>
<dbReference type="eggNOG" id="COG1570">
    <property type="taxonomic scope" value="Bacteria"/>
</dbReference>
<dbReference type="HOGENOM" id="CLU_023625_3_1_6"/>
<dbReference type="OrthoDB" id="9802795at2"/>
<dbReference type="Proteomes" id="UP000001867">
    <property type="component" value="Chromosome"/>
</dbReference>
<dbReference type="GO" id="GO:0005737">
    <property type="term" value="C:cytoplasm"/>
    <property type="evidence" value="ECO:0007669"/>
    <property type="project" value="UniProtKB-SubCell"/>
</dbReference>
<dbReference type="GO" id="GO:0009318">
    <property type="term" value="C:exodeoxyribonuclease VII complex"/>
    <property type="evidence" value="ECO:0007669"/>
    <property type="project" value="InterPro"/>
</dbReference>
<dbReference type="GO" id="GO:0008855">
    <property type="term" value="F:exodeoxyribonuclease VII activity"/>
    <property type="evidence" value="ECO:0007669"/>
    <property type="project" value="UniProtKB-UniRule"/>
</dbReference>
<dbReference type="GO" id="GO:0003676">
    <property type="term" value="F:nucleic acid binding"/>
    <property type="evidence" value="ECO:0007669"/>
    <property type="project" value="InterPro"/>
</dbReference>
<dbReference type="GO" id="GO:0006308">
    <property type="term" value="P:DNA catabolic process"/>
    <property type="evidence" value="ECO:0007669"/>
    <property type="project" value="UniProtKB-UniRule"/>
</dbReference>
<dbReference type="CDD" id="cd04489">
    <property type="entry name" value="ExoVII_LU_OBF"/>
    <property type="match status" value="1"/>
</dbReference>
<dbReference type="HAMAP" id="MF_00378">
    <property type="entry name" value="Exonuc_7_L"/>
    <property type="match status" value="1"/>
</dbReference>
<dbReference type="InterPro" id="IPR003753">
    <property type="entry name" value="Exonuc_VII_L"/>
</dbReference>
<dbReference type="InterPro" id="IPR020579">
    <property type="entry name" value="Exonuc_VII_lsu_C"/>
</dbReference>
<dbReference type="InterPro" id="IPR025824">
    <property type="entry name" value="OB-fold_nuc-bd_dom"/>
</dbReference>
<dbReference type="NCBIfam" id="TIGR00237">
    <property type="entry name" value="xseA"/>
    <property type="match status" value="1"/>
</dbReference>
<dbReference type="PANTHER" id="PTHR30008">
    <property type="entry name" value="EXODEOXYRIBONUCLEASE 7 LARGE SUBUNIT"/>
    <property type="match status" value="1"/>
</dbReference>
<dbReference type="PANTHER" id="PTHR30008:SF0">
    <property type="entry name" value="EXODEOXYRIBONUCLEASE 7 LARGE SUBUNIT"/>
    <property type="match status" value="1"/>
</dbReference>
<dbReference type="Pfam" id="PF02601">
    <property type="entry name" value="Exonuc_VII_L"/>
    <property type="match status" value="1"/>
</dbReference>
<dbReference type="Pfam" id="PF13742">
    <property type="entry name" value="tRNA_anti_2"/>
    <property type="match status" value="1"/>
</dbReference>
<proteinExistence type="inferred from homology"/>
<name>EX7L_STRM5</name>
<evidence type="ECO:0000255" key="1">
    <source>
        <dbReference type="HAMAP-Rule" id="MF_00378"/>
    </source>
</evidence>
<protein>
    <recommendedName>
        <fullName evidence="1">Exodeoxyribonuclease 7 large subunit</fullName>
        <ecNumber evidence="1">3.1.11.6</ecNumber>
    </recommendedName>
    <alternativeName>
        <fullName evidence="1">Exodeoxyribonuclease VII large subunit</fullName>
        <shortName evidence="1">Exonuclease VII large subunit</shortName>
    </alternativeName>
</protein>
<reference key="1">
    <citation type="submission" date="2008-06" db="EMBL/GenBank/DDBJ databases">
        <title>Complete sequence of Stenotrophomonas maltophilia R551-3.</title>
        <authorList>
            <consortium name="US DOE Joint Genome Institute"/>
            <person name="Lucas S."/>
            <person name="Copeland A."/>
            <person name="Lapidus A."/>
            <person name="Glavina del Rio T."/>
            <person name="Dalin E."/>
            <person name="Tice H."/>
            <person name="Pitluck S."/>
            <person name="Chain P."/>
            <person name="Malfatti S."/>
            <person name="Shin M."/>
            <person name="Vergez L."/>
            <person name="Lang D."/>
            <person name="Schmutz J."/>
            <person name="Larimer F."/>
            <person name="Land M."/>
            <person name="Hauser L."/>
            <person name="Kyrpides N."/>
            <person name="Mikhailova N."/>
            <person name="Taghavi S."/>
            <person name="Monchy S."/>
            <person name="Newman L."/>
            <person name="Vangronsveld J."/>
            <person name="van der Lelie D."/>
            <person name="Richardson P."/>
        </authorList>
    </citation>
    <scope>NUCLEOTIDE SEQUENCE [LARGE SCALE GENOMIC DNA]</scope>
    <source>
        <strain>R551-3</strain>
    </source>
</reference>
<accession>B4SQC8</accession>